<sequence length="754" mass="84631">MTILTHTLGFPRVGLRRELKKAQESYWAGNSTREALLAVGRELRARHWEQQKQAGIDLLPVGDFAWYDHVLTTSLLLGNVPARHQNNDGSVDIDTLFRIGRGRAPTGEPAAAAEMTKWFNTNYHYIVPEFSKGQQFRLTWTQLLEEVDEALALGHKIKPVLLGPVTYLWLGKVKGEPFDRLTLLKDILPVYQHVLAELAKRGIEWVQIDEPALVLELPQAWLDAFKPAYDALAGQVKLLLTTYFEGVTPNLDTIIALPVQGLHVDLIHGKDDVAELHQRLPVDWLLSAGLINGRNVWRADLTEKYAQINALVGKRALWVASSCSLLHSPIDLSVETRLDTEVKSWFAFALQKCGELALLRDALNSGETAALEEWSAPIQARRHSRRVHNAAVEKRLAAITAQDSQRENPYEVRAEAQRARFKLPAWPTTTIGSFPQTTEIRGLRLDFKKGNLDANNYRTGIAEHIKQAIIEQERLGLDVLVHGEAERNDMVEYFGEHLDGFVFTQNGWVQSYGSRCVKPPVVIGDISRPAPITVEWAKYAQSLTDKPVKGMLTGPVTILCWSFPREDVTRETIAKQIALALRDEVADLEAAGIGIIQIDEPALREGLPLRRSDWDAYLEWGVEAFRINAAVAKDETQIHTHMCYCEFNDIMDSIAALDADVITIETSRSDMELLESFEAFDYPNEIGPGVYDIHSPNVPSVEWIEALLKKAAQRIPAQRLWVNPDCGLKTRGWPETRAALANMVKAAHNLRQAK</sequence>
<dbReference type="EC" id="2.1.1.14" evidence="1"/>
<dbReference type="EMBL" id="CP001138">
    <property type="protein sequence ID" value="ACH52405.1"/>
    <property type="molecule type" value="Genomic_DNA"/>
</dbReference>
<dbReference type="RefSeq" id="WP_000154181.1">
    <property type="nucleotide sequence ID" value="NC_011149.1"/>
</dbReference>
<dbReference type="SMR" id="B5EZU1"/>
<dbReference type="KEGG" id="sea:SeAg_B4194"/>
<dbReference type="HOGENOM" id="CLU_013175_0_0_6"/>
<dbReference type="UniPathway" id="UPA00051">
    <property type="reaction ID" value="UER00082"/>
</dbReference>
<dbReference type="Proteomes" id="UP000008819">
    <property type="component" value="Chromosome"/>
</dbReference>
<dbReference type="GO" id="GO:0003871">
    <property type="term" value="F:5-methyltetrahydropteroyltriglutamate-homocysteine S-methyltransferase activity"/>
    <property type="evidence" value="ECO:0007669"/>
    <property type="project" value="UniProtKB-UniRule"/>
</dbReference>
<dbReference type="GO" id="GO:0008270">
    <property type="term" value="F:zinc ion binding"/>
    <property type="evidence" value="ECO:0007669"/>
    <property type="project" value="InterPro"/>
</dbReference>
<dbReference type="GO" id="GO:0009086">
    <property type="term" value="P:methionine biosynthetic process"/>
    <property type="evidence" value="ECO:0007669"/>
    <property type="project" value="UniProtKB-UniRule"/>
</dbReference>
<dbReference type="GO" id="GO:0032259">
    <property type="term" value="P:methylation"/>
    <property type="evidence" value="ECO:0007669"/>
    <property type="project" value="UniProtKB-KW"/>
</dbReference>
<dbReference type="CDD" id="cd03311">
    <property type="entry name" value="CIMS_C_terminal_like"/>
    <property type="match status" value="1"/>
</dbReference>
<dbReference type="CDD" id="cd03312">
    <property type="entry name" value="CIMS_N_terminal_like"/>
    <property type="match status" value="1"/>
</dbReference>
<dbReference type="FunFam" id="3.20.20.210:FF:000002">
    <property type="entry name" value="5-methyltetrahydropteroyltriglutamate--homocysteine methyltransferase"/>
    <property type="match status" value="1"/>
</dbReference>
<dbReference type="FunFam" id="3.20.20.210:FF:000003">
    <property type="entry name" value="5-methyltetrahydropteroyltriglutamate--homocysteine methyltransferase"/>
    <property type="match status" value="1"/>
</dbReference>
<dbReference type="Gene3D" id="3.20.20.210">
    <property type="match status" value="2"/>
</dbReference>
<dbReference type="HAMAP" id="MF_00172">
    <property type="entry name" value="Meth_synth"/>
    <property type="match status" value="1"/>
</dbReference>
<dbReference type="InterPro" id="IPR013215">
    <property type="entry name" value="Cbl-indep_Met_Synth_N"/>
</dbReference>
<dbReference type="InterPro" id="IPR006276">
    <property type="entry name" value="Cobalamin-indep_Met_synthase"/>
</dbReference>
<dbReference type="InterPro" id="IPR002629">
    <property type="entry name" value="Met_Synth_C/arc"/>
</dbReference>
<dbReference type="InterPro" id="IPR038071">
    <property type="entry name" value="UROD/MetE-like_sf"/>
</dbReference>
<dbReference type="NCBIfam" id="TIGR01371">
    <property type="entry name" value="met_syn_B12ind"/>
    <property type="match status" value="1"/>
</dbReference>
<dbReference type="NCBIfam" id="NF003556">
    <property type="entry name" value="PRK05222.1"/>
    <property type="match status" value="1"/>
</dbReference>
<dbReference type="PANTHER" id="PTHR30519">
    <property type="entry name" value="5-METHYLTETRAHYDROPTEROYLTRIGLUTAMATE--HOMOCYSTEINE METHYLTRANSFERASE"/>
    <property type="match status" value="1"/>
</dbReference>
<dbReference type="Pfam" id="PF08267">
    <property type="entry name" value="Meth_synt_1"/>
    <property type="match status" value="1"/>
</dbReference>
<dbReference type="Pfam" id="PF01717">
    <property type="entry name" value="Meth_synt_2"/>
    <property type="match status" value="1"/>
</dbReference>
<dbReference type="PIRSF" id="PIRSF000382">
    <property type="entry name" value="MeTrfase_B12_ind"/>
    <property type="match status" value="1"/>
</dbReference>
<dbReference type="SUPFAM" id="SSF51726">
    <property type="entry name" value="UROD/MetE-like"/>
    <property type="match status" value="2"/>
</dbReference>
<comment type="function">
    <text evidence="1">Catalyzes the transfer of a methyl group from 5-methyltetrahydrofolate to homocysteine resulting in methionine formation.</text>
</comment>
<comment type="catalytic activity">
    <reaction evidence="1">
        <text>5-methyltetrahydropteroyltri-L-glutamate + L-homocysteine = tetrahydropteroyltri-L-glutamate + L-methionine</text>
        <dbReference type="Rhea" id="RHEA:21196"/>
        <dbReference type="ChEBI" id="CHEBI:57844"/>
        <dbReference type="ChEBI" id="CHEBI:58140"/>
        <dbReference type="ChEBI" id="CHEBI:58199"/>
        <dbReference type="ChEBI" id="CHEBI:58207"/>
        <dbReference type="EC" id="2.1.1.14"/>
    </reaction>
</comment>
<comment type="cofactor">
    <cofactor evidence="1">
        <name>Zn(2+)</name>
        <dbReference type="ChEBI" id="CHEBI:29105"/>
    </cofactor>
    <text evidence="1">Binds 1 zinc ion per subunit.</text>
</comment>
<comment type="pathway">
    <text evidence="1">Amino-acid biosynthesis; L-methionine biosynthesis via de novo pathway; L-methionine from L-homocysteine (MetE route): step 1/1.</text>
</comment>
<comment type="similarity">
    <text evidence="1">Belongs to the vitamin-B12 independent methionine synthase family.</text>
</comment>
<gene>
    <name evidence="1" type="primary">metE</name>
    <name type="ordered locus">SeAg_B4194</name>
</gene>
<feature type="chain" id="PRO_1000097837" description="5-methyltetrahydropteroyltriglutamate--homocysteine methyltransferase">
    <location>
        <begin position="1"/>
        <end position="754"/>
    </location>
</feature>
<feature type="active site" description="Proton donor" evidence="1">
    <location>
        <position position="694"/>
    </location>
</feature>
<feature type="binding site" evidence="1">
    <location>
        <begin position="17"/>
        <end position="20"/>
    </location>
    <ligand>
        <name>5-methyltetrahydropteroyltri-L-glutamate</name>
        <dbReference type="ChEBI" id="CHEBI:58207"/>
    </ligand>
</feature>
<feature type="binding site" evidence="1">
    <location>
        <position position="117"/>
    </location>
    <ligand>
        <name>5-methyltetrahydropteroyltri-L-glutamate</name>
        <dbReference type="ChEBI" id="CHEBI:58207"/>
    </ligand>
</feature>
<feature type="binding site" evidence="1">
    <location>
        <begin position="431"/>
        <end position="433"/>
    </location>
    <ligand>
        <name>L-homocysteine</name>
        <dbReference type="ChEBI" id="CHEBI:58199"/>
    </ligand>
</feature>
<feature type="binding site" evidence="1">
    <location>
        <begin position="431"/>
        <end position="433"/>
    </location>
    <ligand>
        <name>L-methionine</name>
        <dbReference type="ChEBI" id="CHEBI:57844"/>
    </ligand>
</feature>
<feature type="binding site" evidence="1">
    <location>
        <position position="484"/>
    </location>
    <ligand>
        <name>L-homocysteine</name>
        <dbReference type="ChEBI" id="CHEBI:58199"/>
    </ligand>
</feature>
<feature type="binding site" evidence="1">
    <location>
        <position position="484"/>
    </location>
    <ligand>
        <name>L-methionine</name>
        <dbReference type="ChEBI" id="CHEBI:57844"/>
    </ligand>
</feature>
<feature type="binding site" evidence="1">
    <location>
        <begin position="515"/>
        <end position="516"/>
    </location>
    <ligand>
        <name>5-methyltetrahydropteroyltri-L-glutamate</name>
        <dbReference type="ChEBI" id="CHEBI:58207"/>
    </ligand>
</feature>
<feature type="binding site" evidence="1">
    <location>
        <position position="561"/>
    </location>
    <ligand>
        <name>5-methyltetrahydropteroyltri-L-glutamate</name>
        <dbReference type="ChEBI" id="CHEBI:58207"/>
    </ligand>
</feature>
<feature type="binding site" evidence="1">
    <location>
        <position position="599"/>
    </location>
    <ligand>
        <name>L-homocysteine</name>
        <dbReference type="ChEBI" id="CHEBI:58199"/>
    </ligand>
</feature>
<feature type="binding site" evidence="1">
    <location>
        <position position="599"/>
    </location>
    <ligand>
        <name>L-methionine</name>
        <dbReference type="ChEBI" id="CHEBI:57844"/>
    </ligand>
</feature>
<feature type="binding site" evidence="1">
    <location>
        <position position="605"/>
    </location>
    <ligand>
        <name>5-methyltetrahydropteroyltri-L-glutamate</name>
        <dbReference type="ChEBI" id="CHEBI:58207"/>
    </ligand>
</feature>
<feature type="binding site" evidence="1">
    <location>
        <position position="641"/>
    </location>
    <ligand>
        <name>Zn(2+)</name>
        <dbReference type="ChEBI" id="CHEBI:29105"/>
        <note>catalytic</note>
    </ligand>
</feature>
<feature type="binding site" evidence="1">
    <location>
        <position position="643"/>
    </location>
    <ligand>
        <name>Zn(2+)</name>
        <dbReference type="ChEBI" id="CHEBI:29105"/>
        <note>catalytic</note>
    </ligand>
</feature>
<feature type="binding site" evidence="1">
    <location>
        <position position="665"/>
    </location>
    <ligand>
        <name>Zn(2+)</name>
        <dbReference type="ChEBI" id="CHEBI:29105"/>
        <note>catalytic</note>
    </ligand>
</feature>
<feature type="binding site" evidence="1">
    <location>
        <position position="726"/>
    </location>
    <ligand>
        <name>Zn(2+)</name>
        <dbReference type="ChEBI" id="CHEBI:29105"/>
        <note>catalytic</note>
    </ligand>
</feature>
<protein>
    <recommendedName>
        <fullName evidence="1">5-methyltetrahydropteroyltriglutamate--homocysteine methyltransferase</fullName>
        <ecNumber evidence="1">2.1.1.14</ecNumber>
    </recommendedName>
    <alternativeName>
        <fullName evidence="1">Cobalamin-independent methionine synthase</fullName>
    </alternativeName>
    <alternativeName>
        <fullName evidence="1">Methionine synthase, vitamin-B12 independent isozyme</fullName>
    </alternativeName>
</protein>
<proteinExistence type="inferred from homology"/>
<name>METE_SALA4</name>
<organism>
    <name type="scientific">Salmonella agona (strain SL483)</name>
    <dbReference type="NCBI Taxonomy" id="454166"/>
    <lineage>
        <taxon>Bacteria</taxon>
        <taxon>Pseudomonadati</taxon>
        <taxon>Pseudomonadota</taxon>
        <taxon>Gammaproteobacteria</taxon>
        <taxon>Enterobacterales</taxon>
        <taxon>Enterobacteriaceae</taxon>
        <taxon>Salmonella</taxon>
    </lineage>
</organism>
<reference key="1">
    <citation type="journal article" date="2011" name="J. Bacteriol.">
        <title>Comparative genomics of 28 Salmonella enterica isolates: evidence for CRISPR-mediated adaptive sublineage evolution.</title>
        <authorList>
            <person name="Fricke W.F."/>
            <person name="Mammel M.K."/>
            <person name="McDermott P.F."/>
            <person name="Tartera C."/>
            <person name="White D.G."/>
            <person name="Leclerc J.E."/>
            <person name="Ravel J."/>
            <person name="Cebula T.A."/>
        </authorList>
    </citation>
    <scope>NUCLEOTIDE SEQUENCE [LARGE SCALE GENOMIC DNA]</scope>
    <source>
        <strain>SL483</strain>
    </source>
</reference>
<evidence type="ECO:0000255" key="1">
    <source>
        <dbReference type="HAMAP-Rule" id="MF_00172"/>
    </source>
</evidence>
<accession>B5EZU1</accession>
<keyword id="KW-0028">Amino-acid biosynthesis</keyword>
<keyword id="KW-0479">Metal-binding</keyword>
<keyword id="KW-0486">Methionine biosynthesis</keyword>
<keyword id="KW-0489">Methyltransferase</keyword>
<keyword id="KW-0677">Repeat</keyword>
<keyword id="KW-0808">Transferase</keyword>
<keyword id="KW-0862">Zinc</keyword>